<evidence type="ECO:0000255" key="1">
    <source>
        <dbReference type="HAMAP-Rule" id="MF_00558"/>
    </source>
</evidence>
<dbReference type="EC" id="6.2.1.5" evidence="1"/>
<dbReference type="EMBL" id="CP000668">
    <property type="protein sequence ID" value="ABP40950.1"/>
    <property type="molecule type" value="Genomic_DNA"/>
</dbReference>
<dbReference type="RefSeq" id="WP_002210728.1">
    <property type="nucleotide sequence ID" value="NZ_CP009715.1"/>
</dbReference>
<dbReference type="SMR" id="A4TNT8"/>
<dbReference type="GeneID" id="57977251"/>
<dbReference type="KEGG" id="ypp:YPDSF_2582"/>
<dbReference type="PATRIC" id="fig|386656.14.peg.4103"/>
<dbReference type="UniPathway" id="UPA00223">
    <property type="reaction ID" value="UER00999"/>
</dbReference>
<dbReference type="GO" id="GO:0005829">
    <property type="term" value="C:cytosol"/>
    <property type="evidence" value="ECO:0007669"/>
    <property type="project" value="TreeGrafter"/>
</dbReference>
<dbReference type="GO" id="GO:0042709">
    <property type="term" value="C:succinate-CoA ligase complex"/>
    <property type="evidence" value="ECO:0007669"/>
    <property type="project" value="TreeGrafter"/>
</dbReference>
<dbReference type="GO" id="GO:0005524">
    <property type="term" value="F:ATP binding"/>
    <property type="evidence" value="ECO:0007669"/>
    <property type="project" value="UniProtKB-UniRule"/>
</dbReference>
<dbReference type="GO" id="GO:0000287">
    <property type="term" value="F:magnesium ion binding"/>
    <property type="evidence" value="ECO:0007669"/>
    <property type="project" value="UniProtKB-UniRule"/>
</dbReference>
<dbReference type="GO" id="GO:0004775">
    <property type="term" value="F:succinate-CoA ligase (ADP-forming) activity"/>
    <property type="evidence" value="ECO:0007669"/>
    <property type="project" value="UniProtKB-UniRule"/>
</dbReference>
<dbReference type="GO" id="GO:0004776">
    <property type="term" value="F:succinate-CoA ligase (GDP-forming) activity"/>
    <property type="evidence" value="ECO:0007669"/>
    <property type="project" value="RHEA"/>
</dbReference>
<dbReference type="GO" id="GO:0006104">
    <property type="term" value="P:succinyl-CoA metabolic process"/>
    <property type="evidence" value="ECO:0007669"/>
    <property type="project" value="TreeGrafter"/>
</dbReference>
<dbReference type="GO" id="GO:0006099">
    <property type="term" value="P:tricarboxylic acid cycle"/>
    <property type="evidence" value="ECO:0007669"/>
    <property type="project" value="UniProtKB-UniRule"/>
</dbReference>
<dbReference type="FunFam" id="3.30.1490.20:FF:000002">
    <property type="entry name" value="Succinate--CoA ligase [ADP-forming] subunit beta"/>
    <property type="match status" value="1"/>
</dbReference>
<dbReference type="FunFam" id="3.30.470.20:FF:000002">
    <property type="entry name" value="Succinate--CoA ligase [ADP-forming] subunit beta"/>
    <property type="match status" value="1"/>
</dbReference>
<dbReference type="FunFam" id="3.40.50.261:FF:000001">
    <property type="entry name" value="Succinate--CoA ligase [ADP-forming] subunit beta"/>
    <property type="match status" value="1"/>
</dbReference>
<dbReference type="Gene3D" id="3.30.1490.20">
    <property type="entry name" value="ATP-grasp fold, A domain"/>
    <property type="match status" value="1"/>
</dbReference>
<dbReference type="Gene3D" id="3.30.470.20">
    <property type="entry name" value="ATP-grasp fold, B domain"/>
    <property type="match status" value="1"/>
</dbReference>
<dbReference type="Gene3D" id="3.40.50.261">
    <property type="entry name" value="Succinyl-CoA synthetase domains"/>
    <property type="match status" value="1"/>
</dbReference>
<dbReference type="HAMAP" id="MF_00558">
    <property type="entry name" value="Succ_CoA_beta"/>
    <property type="match status" value="1"/>
</dbReference>
<dbReference type="InterPro" id="IPR011761">
    <property type="entry name" value="ATP-grasp"/>
</dbReference>
<dbReference type="InterPro" id="IPR013650">
    <property type="entry name" value="ATP-grasp_succ-CoA_synth-type"/>
</dbReference>
<dbReference type="InterPro" id="IPR013815">
    <property type="entry name" value="ATP_grasp_subdomain_1"/>
</dbReference>
<dbReference type="InterPro" id="IPR017866">
    <property type="entry name" value="Succ-CoA_synthase_bsu_CS"/>
</dbReference>
<dbReference type="InterPro" id="IPR005811">
    <property type="entry name" value="SUCC_ACL_C"/>
</dbReference>
<dbReference type="InterPro" id="IPR005809">
    <property type="entry name" value="Succ_CoA_ligase-like_bsu"/>
</dbReference>
<dbReference type="InterPro" id="IPR016102">
    <property type="entry name" value="Succinyl-CoA_synth-like"/>
</dbReference>
<dbReference type="NCBIfam" id="NF001913">
    <property type="entry name" value="PRK00696.1"/>
    <property type="match status" value="1"/>
</dbReference>
<dbReference type="NCBIfam" id="TIGR01016">
    <property type="entry name" value="sucCoAbeta"/>
    <property type="match status" value="1"/>
</dbReference>
<dbReference type="PANTHER" id="PTHR11815:SF10">
    <property type="entry name" value="SUCCINATE--COA LIGASE [GDP-FORMING] SUBUNIT BETA, MITOCHONDRIAL"/>
    <property type="match status" value="1"/>
</dbReference>
<dbReference type="PANTHER" id="PTHR11815">
    <property type="entry name" value="SUCCINYL-COA SYNTHETASE BETA CHAIN"/>
    <property type="match status" value="1"/>
</dbReference>
<dbReference type="Pfam" id="PF08442">
    <property type="entry name" value="ATP-grasp_2"/>
    <property type="match status" value="1"/>
</dbReference>
<dbReference type="Pfam" id="PF00549">
    <property type="entry name" value="Ligase_CoA"/>
    <property type="match status" value="1"/>
</dbReference>
<dbReference type="PIRSF" id="PIRSF001554">
    <property type="entry name" value="SucCS_beta"/>
    <property type="match status" value="1"/>
</dbReference>
<dbReference type="SUPFAM" id="SSF56059">
    <property type="entry name" value="Glutathione synthetase ATP-binding domain-like"/>
    <property type="match status" value="1"/>
</dbReference>
<dbReference type="SUPFAM" id="SSF52210">
    <property type="entry name" value="Succinyl-CoA synthetase domains"/>
    <property type="match status" value="1"/>
</dbReference>
<dbReference type="PROSITE" id="PS50975">
    <property type="entry name" value="ATP_GRASP"/>
    <property type="match status" value="1"/>
</dbReference>
<dbReference type="PROSITE" id="PS01217">
    <property type="entry name" value="SUCCINYL_COA_LIG_3"/>
    <property type="match status" value="1"/>
</dbReference>
<sequence length="388" mass="41406">MNLHEYQAKQLFARYGMPAPTGYACTTPREAEEAASKIGAGPWVVKCQVHAGGRGKAGGVKLVNSKEDIRAFAEQWLGKKLVTYQTDANGQPVHQILVEAATDIDKELYLGAVIDRSSRRVVFMASTEGGVEIEKVAEETPELIHKIALDPLTGPQPYQGRELAFKLGLTGKQVGQFTKIFMGLATLFLERDLAMVEINPLVVTKQGDLICLDGKLGADGNALFRQPELREMRDPSQEDAREAHAAQWELNYVALDGNIGCMVNGAGLAMGTMDIVKLHGGEPANFLDVGGGATKERVTEAFKIILSDDKVKAVFVNIFGGIVRCDLIADGIIGAVEEVGVNVPVVVRLEGNNAELGAKKLADSGLNIIAATSLTDAAQQVVAAVGAK</sequence>
<reference key="1">
    <citation type="submission" date="2007-02" db="EMBL/GenBank/DDBJ databases">
        <title>Complete sequence of chromosome of Yersinia pestis Pestoides F.</title>
        <authorList>
            <consortium name="US DOE Joint Genome Institute"/>
            <person name="Copeland A."/>
            <person name="Lucas S."/>
            <person name="Lapidus A."/>
            <person name="Barry K."/>
            <person name="Detter J.C."/>
            <person name="Glavina del Rio T."/>
            <person name="Hammon N."/>
            <person name="Israni S."/>
            <person name="Dalin E."/>
            <person name="Tice H."/>
            <person name="Pitluck S."/>
            <person name="Di Bartolo G."/>
            <person name="Chain P."/>
            <person name="Malfatti S."/>
            <person name="Shin M."/>
            <person name="Vergez L."/>
            <person name="Schmutz J."/>
            <person name="Larimer F."/>
            <person name="Land M."/>
            <person name="Hauser L."/>
            <person name="Worsham P."/>
            <person name="Chu M."/>
            <person name="Bearden S."/>
            <person name="Garcia E."/>
            <person name="Richardson P."/>
        </authorList>
    </citation>
    <scope>NUCLEOTIDE SEQUENCE [LARGE SCALE GENOMIC DNA]</scope>
    <source>
        <strain>Pestoides F</strain>
    </source>
</reference>
<proteinExistence type="inferred from homology"/>
<gene>
    <name evidence="1" type="primary">sucC</name>
    <name type="ordered locus">YPDSF_2582</name>
</gene>
<protein>
    <recommendedName>
        <fullName evidence="1">Succinate--CoA ligase [ADP-forming] subunit beta</fullName>
        <ecNumber evidence="1">6.2.1.5</ecNumber>
    </recommendedName>
    <alternativeName>
        <fullName evidence="1">Succinyl-CoA synthetase subunit beta</fullName>
        <shortName evidence="1">SCS-beta</shortName>
    </alternativeName>
</protein>
<comment type="function">
    <text evidence="1">Succinyl-CoA synthetase functions in the citric acid cycle (TCA), coupling the hydrolysis of succinyl-CoA to the synthesis of either ATP or GTP and thus represents the only step of substrate-level phosphorylation in the TCA. The beta subunit provides nucleotide specificity of the enzyme and binds the substrate succinate, while the binding sites for coenzyme A and phosphate are found in the alpha subunit.</text>
</comment>
<comment type="catalytic activity">
    <reaction evidence="1">
        <text>succinate + ATP + CoA = succinyl-CoA + ADP + phosphate</text>
        <dbReference type="Rhea" id="RHEA:17661"/>
        <dbReference type="ChEBI" id="CHEBI:30031"/>
        <dbReference type="ChEBI" id="CHEBI:30616"/>
        <dbReference type="ChEBI" id="CHEBI:43474"/>
        <dbReference type="ChEBI" id="CHEBI:57287"/>
        <dbReference type="ChEBI" id="CHEBI:57292"/>
        <dbReference type="ChEBI" id="CHEBI:456216"/>
        <dbReference type="EC" id="6.2.1.5"/>
    </reaction>
    <physiologicalReaction direction="right-to-left" evidence="1">
        <dbReference type="Rhea" id="RHEA:17663"/>
    </physiologicalReaction>
</comment>
<comment type="catalytic activity">
    <reaction evidence="1">
        <text>GTP + succinate + CoA = succinyl-CoA + GDP + phosphate</text>
        <dbReference type="Rhea" id="RHEA:22120"/>
        <dbReference type="ChEBI" id="CHEBI:30031"/>
        <dbReference type="ChEBI" id="CHEBI:37565"/>
        <dbReference type="ChEBI" id="CHEBI:43474"/>
        <dbReference type="ChEBI" id="CHEBI:57287"/>
        <dbReference type="ChEBI" id="CHEBI:57292"/>
        <dbReference type="ChEBI" id="CHEBI:58189"/>
    </reaction>
    <physiologicalReaction direction="right-to-left" evidence="1">
        <dbReference type="Rhea" id="RHEA:22122"/>
    </physiologicalReaction>
</comment>
<comment type="cofactor">
    <cofactor evidence="1">
        <name>Mg(2+)</name>
        <dbReference type="ChEBI" id="CHEBI:18420"/>
    </cofactor>
    <text evidence="1">Binds 1 Mg(2+) ion per subunit.</text>
</comment>
<comment type="pathway">
    <text evidence="1">Carbohydrate metabolism; tricarboxylic acid cycle; succinate from succinyl-CoA (ligase route): step 1/1.</text>
</comment>
<comment type="subunit">
    <text evidence="1">Heterotetramer of two alpha and two beta subunits.</text>
</comment>
<comment type="similarity">
    <text evidence="1">Belongs to the succinate/malate CoA ligase beta subunit family.</text>
</comment>
<organism>
    <name type="scientific">Yersinia pestis (strain Pestoides F)</name>
    <dbReference type="NCBI Taxonomy" id="386656"/>
    <lineage>
        <taxon>Bacteria</taxon>
        <taxon>Pseudomonadati</taxon>
        <taxon>Pseudomonadota</taxon>
        <taxon>Gammaproteobacteria</taxon>
        <taxon>Enterobacterales</taxon>
        <taxon>Yersiniaceae</taxon>
        <taxon>Yersinia</taxon>
    </lineage>
</organism>
<name>SUCC_YERPP</name>
<keyword id="KW-0067">ATP-binding</keyword>
<keyword id="KW-0436">Ligase</keyword>
<keyword id="KW-0460">Magnesium</keyword>
<keyword id="KW-0479">Metal-binding</keyword>
<keyword id="KW-0547">Nucleotide-binding</keyword>
<keyword id="KW-0816">Tricarboxylic acid cycle</keyword>
<feature type="chain" id="PRO_1000082269" description="Succinate--CoA ligase [ADP-forming] subunit beta">
    <location>
        <begin position="1"/>
        <end position="388"/>
    </location>
</feature>
<feature type="domain" description="ATP-grasp" evidence="1">
    <location>
        <begin position="9"/>
        <end position="244"/>
    </location>
</feature>
<feature type="binding site" evidence="1">
    <location>
        <position position="46"/>
    </location>
    <ligand>
        <name>ATP</name>
        <dbReference type="ChEBI" id="CHEBI:30616"/>
    </ligand>
</feature>
<feature type="binding site" evidence="1">
    <location>
        <begin position="53"/>
        <end position="55"/>
    </location>
    <ligand>
        <name>ATP</name>
        <dbReference type="ChEBI" id="CHEBI:30616"/>
    </ligand>
</feature>
<feature type="binding site" evidence="1">
    <location>
        <position position="99"/>
    </location>
    <ligand>
        <name>ATP</name>
        <dbReference type="ChEBI" id="CHEBI:30616"/>
    </ligand>
</feature>
<feature type="binding site" evidence="1">
    <location>
        <position position="102"/>
    </location>
    <ligand>
        <name>ATP</name>
        <dbReference type="ChEBI" id="CHEBI:30616"/>
    </ligand>
</feature>
<feature type="binding site" evidence="1">
    <location>
        <position position="107"/>
    </location>
    <ligand>
        <name>ATP</name>
        <dbReference type="ChEBI" id="CHEBI:30616"/>
    </ligand>
</feature>
<feature type="binding site" evidence="1">
    <location>
        <position position="199"/>
    </location>
    <ligand>
        <name>Mg(2+)</name>
        <dbReference type="ChEBI" id="CHEBI:18420"/>
    </ligand>
</feature>
<feature type="binding site" evidence="1">
    <location>
        <position position="213"/>
    </location>
    <ligand>
        <name>Mg(2+)</name>
        <dbReference type="ChEBI" id="CHEBI:18420"/>
    </ligand>
</feature>
<feature type="binding site" evidence="1">
    <location>
        <position position="264"/>
    </location>
    <ligand>
        <name>substrate</name>
        <note>ligand shared with subunit alpha</note>
    </ligand>
</feature>
<feature type="binding site" evidence="1">
    <location>
        <begin position="321"/>
        <end position="323"/>
    </location>
    <ligand>
        <name>substrate</name>
        <note>ligand shared with subunit alpha</note>
    </ligand>
</feature>
<accession>A4TNT8</accession>